<dbReference type="EC" id="4.2.1.126" evidence="1"/>
<dbReference type="EMBL" id="CP000308">
    <property type="protein sequence ID" value="ABG14329.1"/>
    <property type="molecule type" value="Genomic_DNA"/>
</dbReference>
<dbReference type="RefSeq" id="WP_002211565.1">
    <property type="nucleotide sequence ID" value="NZ_CP009906.1"/>
</dbReference>
<dbReference type="SMR" id="Q1C5E3"/>
<dbReference type="GeneID" id="57975879"/>
<dbReference type="KEGG" id="ypa:YPA_2364"/>
<dbReference type="UniPathway" id="UPA00342"/>
<dbReference type="UniPathway" id="UPA00343"/>
<dbReference type="UniPathway" id="UPA00544"/>
<dbReference type="Proteomes" id="UP000001971">
    <property type="component" value="Chromosome"/>
</dbReference>
<dbReference type="GO" id="GO:0097367">
    <property type="term" value="F:carbohydrate derivative binding"/>
    <property type="evidence" value="ECO:0007669"/>
    <property type="project" value="InterPro"/>
</dbReference>
<dbReference type="GO" id="GO:0016835">
    <property type="term" value="F:carbon-oxygen lyase activity"/>
    <property type="evidence" value="ECO:0007669"/>
    <property type="project" value="UniProtKB-UniRule"/>
</dbReference>
<dbReference type="GO" id="GO:0016803">
    <property type="term" value="F:ether hydrolase activity"/>
    <property type="evidence" value="ECO:0007669"/>
    <property type="project" value="TreeGrafter"/>
</dbReference>
<dbReference type="GO" id="GO:0097175">
    <property type="term" value="P:1,6-anhydro-N-acetyl-beta-muramic acid catabolic process"/>
    <property type="evidence" value="ECO:0007669"/>
    <property type="project" value="UniProtKB-UniRule"/>
</dbReference>
<dbReference type="GO" id="GO:0046348">
    <property type="term" value="P:amino sugar catabolic process"/>
    <property type="evidence" value="ECO:0007669"/>
    <property type="project" value="InterPro"/>
</dbReference>
<dbReference type="GO" id="GO:0097173">
    <property type="term" value="P:N-acetylmuramic acid catabolic process"/>
    <property type="evidence" value="ECO:0007669"/>
    <property type="project" value="UniProtKB-UniPathway"/>
</dbReference>
<dbReference type="GO" id="GO:0009254">
    <property type="term" value="P:peptidoglycan turnover"/>
    <property type="evidence" value="ECO:0007669"/>
    <property type="project" value="UniProtKB-UniRule"/>
</dbReference>
<dbReference type="CDD" id="cd05007">
    <property type="entry name" value="SIS_Etherase"/>
    <property type="match status" value="1"/>
</dbReference>
<dbReference type="FunFam" id="1.10.8.1080:FF:000001">
    <property type="entry name" value="N-acetylmuramic acid 6-phosphate etherase"/>
    <property type="match status" value="1"/>
</dbReference>
<dbReference type="FunFam" id="3.40.50.10490:FF:000014">
    <property type="entry name" value="N-acetylmuramic acid 6-phosphate etherase"/>
    <property type="match status" value="1"/>
</dbReference>
<dbReference type="Gene3D" id="1.10.8.1080">
    <property type="match status" value="1"/>
</dbReference>
<dbReference type="Gene3D" id="3.40.50.10490">
    <property type="entry name" value="Glucose-6-phosphate isomerase like protein, domain 1"/>
    <property type="match status" value="1"/>
</dbReference>
<dbReference type="HAMAP" id="MF_00068">
    <property type="entry name" value="MurQ"/>
    <property type="match status" value="1"/>
</dbReference>
<dbReference type="InterPro" id="IPR005488">
    <property type="entry name" value="Etherase_MurQ"/>
</dbReference>
<dbReference type="InterPro" id="IPR005486">
    <property type="entry name" value="Glucokinase_regulatory_CS"/>
</dbReference>
<dbReference type="InterPro" id="IPR040190">
    <property type="entry name" value="MURQ/GCKR"/>
</dbReference>
<dbReference type="InterPro" id="IPR001347">
    <property type="entry name" value="SIS_dom"/>
</dbReference>
<dbReference type="InterPro" id="IPR046348">
    <property type="entry name" value="SIS_dom_sf"/>
</dbReference>
<dbReference type="InterPro" id="IPR009060">
    <property type="entry name" value="UBA-like_sf"/>
</dbReference>
<dbReference type="NCBIfam" id="TIGR00274">
    <property type="entry name" value="N-acetylmuramic acid 6-phosphate etherase"/>
    <property type="match status" value="1"/>
</dbReference>
<dbReference type="NCBIfam" id="NF003915">
    <property type="entry name" value="PRK05441.1"/>
    <property type="match status" value="1"/>
</dbReference>
<dbReference type="NCBIfam" id="NF009222">
    <property type="entry name" value="PRK12570.1"/>
    <property type="match status" value="1"/>
</dbReference>
<dbReference type="PANTHER" id="PTHR10088">
    <property type="entry name" value="GLUCOKINASE REGULATORY PROTEIN"/>
    <property type="match status" value="1"/>
</dbReference>
<dbReference type="PANTHER" id="PTHR10088:SF5">
    <property type="entry name" value="N-ACETYLMURAMIC ACID 6-PHOSPHATE ETHERASE"/>
    <property type="match status" value="1"/>
</dbReference>
<dbReference type="Pfam" id="PF20741">
    <property type="entry name" value="GKRP-like_C"/>
    <property type="match status" value="1"/>
</dbReference>
<dbReference type="Pfam" id="PF22645">
    <property type="entry name" value="GKRP_SIS_N"/>
    <property type="match status" value="1"/>
</dbReference>
<dbReference type="SUPFAM" id="SSF53697">
    <property type="entry name" value="SIS domain"/>
    <property type="match status" value="1"/>
</dbReference>
<dbReference type="SUPFAM" id="SSF46934">
    <property type="entry name" value="UBA-like"/>
    <property type="match status" value="1"/>
</dbReference>
<dbReference type="PROSITE" id="PS01272">
    <property type="entry name" value="GCKR"/>
    <property type="match status" value="1"/>
</dbReference>
<dbReference type="PROSITE" id="PS51464">
    <property type="entry name" value="SIS"/>
    <property type="match status" value="1"/>
</dbReference>
<evidence type="ECO:0000255" key="1">
    <source>
        <dbReference type="HAMAP-Rule" id="MF_00068"/>
    </source>
</evidence>
<feature type="chain" id="PRO_1000009135" description="N-acetylmuramic acid 6-phosphate etherase">
    <location>
        <begin position="1"/>
        <end position="295"/>
    </location>
</feature>
<feature type="domain" description="SIS" evidence="1">
    <location>
        <begin position="55"/>
        <end position="218"/>
    </location>
</feature>
<feature type="active site" description="Proton donor" evidence="1">
    <location>
        <position position="83"/>
    </location>
</feature>
<feature type="active site" evidence="1">
    <location>
        <position position="114"/>
    </location>
</feature>
<reference key="1">
    <citation type="journal article" date="2006" name="J. Bacteriol.">
        <title>Complete genome sequence of Yersinia pestis strains Antiqua and Nepal516: evidence of gene reduction in an emerging pathogen.</title>
        <authorList>
            <person name="Chain P.S.G."/>
            <person name="Hu P."/>
            <person name="Malfatti S.A."/>
            <person name="Radnedge L."/>
            <person name="Larimer F."/>
            <person name="Vergez L.M."/>
            <person name="Worsham P."/>
            <person name="Chu M.C."/>
            <person name="Andersen G.L."/>
        </authorList>
    </citation>
    <scope>NUCLEOTIDE SEQUENCE [LARGE SCALE GENOMIC DNA]</scope>
    <source>
        <strain>Antiqua</strain>
    </source>
</reference>
<accession>Q1C5E3</accession>
<organism>
    <name type="scientific">Yersinia pestis bv. Antiqua (strain Antiqua)</name>
    <dbReference type="NCBI Taxonomy" id="360102"/>
    <lineage>
        <taxon>Bacteria</taxon>
        <taxon>Pseudomonadati</taxon>
        <taxon>Pseudomonadota</taxon>
        <taxon>Gammaproteobacteria</taxon>
        <taxon>Enterobacterales</taxon>
        <taxon>Yersiniaceae</taxon>
        <taxon>Yersinia</taxon>
    </lineage>
</organism>
<name>MURQ_YERPA</name>
<sequence>MSLGALISESRNPATMELDKLSTLAMLTCINDEDRKVPDAIRLVLPAVAQAVDLAADALKQGGRLIYLGAGTSGRLGVLDASECPPTFGVPHGMVIGLIAGGPGALLKAVEGAEDDIALGMRDLQDLQLTATDMVVGLAASGRTPYVIGALRYARELGCPTAAISCNPDSPIAQEAQVAISPVVGPEALTGSTRMKSGTAQKLVLNMLSTGAMVKLGKVYQNLMVDVKATNVKLVDRACRIVVEATGVSRAEAEHALRQTDFEVKPAILMLLKGVSAEQARQDLRQHHGYLRAAL</sequence>
<gene>
    <name evidence="1" type="primary">murQ</name>
    <name type="ordered locus">YPA_2364</name>
</gene>
<protein>
    <recommendedName>
        <fullName evidence="1">N-acetylmuramic acid 6-phosphate etherase</fullName>
        <shortName evidence="1">MurNAc-6-P etherase</shortName>
        <ecNumber evidence="1">4.2.1.126</ecNumber>
    </recommendedName>
    <alternativeName>
        <fullName evidence="1">N-acetylmuramic acid 6-phosphate hydrolase</fullName>
    </alternativeName>
    <alternativeName>
        <fullName evidence="1">N-acetylmuramic acid 6-phosphate lyase</fullName>
    </alternativeName>
</protein>
<comment type="function">
    <text evidence="1">Specifically catalyzes the cleavage of the D-lactyl ether substituent of MurNAc 6-phosphate, producing GlcNAc 6-phosphate and D-lactate. Together with AnmK, is also required for the utilization of anhydro-N-acetylmuramic acid (anhMurNAc) either imported from the medium or derived from its own cell wall murein, and thus plays a role in cell wall recycling.</text>
</comment>
<comment type="catalytic activity">
    <reaction evidence="1">
        <text>N-acetyl-D-muramate 6-phosphate + H2O = N-acetyl-D-glucosamine 6-phosphate + (R)-lactate</text>
        <dbReference type="Rhea" id="RHEA:26410"/>
        <dbReference type="ChEBI" id="CHEBI:15377"/>
        <dbReference type="ChEBI" id="CHEBI:16004"/>
        <dbReference type="ChEBI" id="CHEBI:57513"/>
        <dbReference type="ChEBI" id="CHEBI:58722"/>
        <dbReference type="EC" id="4.2.1.126"/>
    </reaction>
</comment>
<comment type="pathway">
    <text evidence="1">Amino-sugar metabolism; 1,6-anhydro-N-acetylmuramate degradation.</text>
</comment>
<comment type="pathway">
    <text evidence="1">Amino-sugar metabolism; N-acetylmuramate degradation.</text>
</comment>
<comment type="pathway">
    <text evidence="1">Cell wall biogenesis; peptidoglycan recycling.</text>
</comment>
<comment type="subunit">
    <text evidence="1">Homodimer.</text>
</comment>
<comment type="induction">
    <text evidence="1">Induced by MurNAc 6-phosphate that releases the repressor MurR from the DNA. Repressed by MurR in the absence of MurNAc 6-phosphate.</text>
</comment>
<comment type="miscellaneous">
    <text evidence="1">A lyase-type mechanism (elimination/hydration) is suggested for the cleavage of the lactyl ether bond of MurNAc 6-phosphate, with the formation of an alpha,beta-unsaturated aldehyde intermediate with (E)-stereochemistry, followed by the syn addition of water to give product.</text>
</comment>
<comment type="similarity">
    <text evidence="1">Belongs to the GCKR-like family. MurNAc-6-P etherase subfamily.</text>
</comment>
<proteinExistence type="inferred from homology"/>
<keyword id="KW-0119">Carbohydrate metabolism</keyword>
<keyword id="KW-0456">Lyase</keyword>